<feature type="chain" id="PRO_0000080474" description="Cyclin-H">
    <location>
        <begin position="1"/>
        <end position="323"/>
    </location>
</feature>
<feature type="region of interest" description="Disordered" evidence="2">
    <location>
        <begin position="296"/>
        <end position="323"/>
    </location>
</feature>
<feature type="compositionally biased region" description="Acidic residues" evidence="2">
    <location>
        <begin position="310"/>
        <end position="323"/>
    </location>
</feature>
<feature type="sequence conflict" description="In Ref. 2; AA sequence." evidence="3" ref="2">
    <original>R</original>
    <variation>Y</variation>
    <location>
        <position position="266"/>
    </location>
</feature>
<keyword id="KW-0131">Cell cycle</keyword>
<keyword id="KW-0195">Cyclin</keyword>
<keyword id="KW-0903">Direct protein sequencing</keyword>
<keyword id="KW-0539">Nucleus</keyword>
<keyword id="KW-0597">Phosphoprotein</keyword>
<keyword id="KW-1185">Reference proteome</keyword>
<keyword id="KW-0804">Transcription</keyword>
<keyword id="KW-0805">Transcription regulation</keyword>
<gene>
    <name type="primary">ccnh</name>
</gene>
<sequence>MYHNSTQKKHWTFLSEDEPLRRRIQANVRYRARIRATEKPRLSEIFSLEPHEELAICKYYEKRLLDFCNAFKPTMPKSVLGTACMYFKRFYLNNSVMEHHPRIIMLTCVFLACKVDEFNVSSIQFVGNLGENPLGQEKILEQILEYELLLIQQLNFHLIVHNPYRPFEGFLIDVKTRYPMLENPEVLRKSADEFLNRVALTDACLLFAPSVIALTAILSTASRAGLNMESYLTECLSLKDNQETMSHLLDGMRRLKILVSKYEPARPEEVAALKKRLDHCHSTEVTLSVHGRKRKGYEDDGYISKKPKTEEDEWTDEDFGDSL</sequence>
<reference key="1">
    <citation type="submission" date="1995-01" db="EMBL/GenBank/DDBJ databases">
        <authorList>
            <person name="Martinez A.-M."/>
        </authorList>
    </citation>
    <scope>NUCLEOTIDE SEQUENCE [MRNA]</scope>
    <source>
        <tissue>Oocyte</tissue>
    </source>
</reference>
<reference key="2">
    <citation type="journal article" date="1994" name="EMBO J.">
        <title>p40MO15 associates with a p36 subunit and requires both nuclear translocation and Thr176 phosphorylation to generate cdk-activating kinase activity in Xenopus oocytes.</title>
        <authorList>
            <person name="Labbe J.-C."/>
            <person name="Martinez A.-M."/>
            <person name="Fesquet D."/>
            <person name="Capony J.-P."/>
            <person name="Darbon J.-M."/>
            <person name="Derancourt J."/>
            <person name="Devault A."/>
            <person name="Morin N."/>
            <person name="Cavadore J.-C."/>
            <person name="Doree M."/>
        </authorList>
    </citation>
    <scope>PARTIAL PROTEIN SEQUENCE</scope>
    <source>
        <tissue>Oocyte</tissue>
    </source>
</reference>
<evidence type="ECO:0000250" key="1"/>
<evidence type="ECO:0000256" key="2">
    <source>
        <dbReference type="SAM" id="MobiDB-lite"/>
    </source>
</evidence>
<evidence type="ECO:0000305" key="3"/>
<comment type="function">
    <text evidence="1">Regulates CDK7, the catalytic subunit of the CDK-activating kinase (CAK) enzymatic complex. CAK activates the cyclin-associated kinases CDK1, CDK2, CDK4 and CDK6 by threonine phosphorylation. CAK complexed to the core-TFIIH basal transcription factor activates RNA polymerase II by serine phosphorylation of the repetitive C-terminal domain (CTD) of its large subunit (POLR2A), allowing its escape from the promoter and elongation of the transcripts. Involved in cell cycle control and in RNA transcription by RNA polymerase II. Its expression and activity are constant throughout the cell cycle (By similarity).</text>
</comment>
<comment type="subunit">
    <text>Associates primarily with CDK7 and MAT1 to form the CAK complex. CAK can further associate with the core-TFIIH to form the TFIIH basal transcription factor.</text>
</comment>
<comment type="subcellular location">
    <subcellularLocation>
        <location>Nucleus</location>
    </subcellularLocation>
</comment>
<comment type="similarity">
    <text evidence="3">Belongs to the cyclin family. Cyclin C subfamily.</text>
</comment>
<name>CCNH_XENLA</name>
<organism>
    <name type="scientific">Xenopus laevis</name>
    <name type="common">African clawed frog</name>
    <dbReference type="NCBI Taxonomy" id="8355"/>
    <lineage>
        <taxon>Eukaryota</taxon>
        <taxon>Metazoa</taxon>
        <taxon>Chordata</taxon>
        <taxon>Craniata</taxon>
        <taxon>Vertebrata</taxon>
        <taxon>Euteleostomi</taxon>
        <taxon>Amphibia</taxon>
        <taxon>Batrachia</taxon>
        <taxon>Anura</taxon>
        <taxon>Pipoidea</taxon>
        <taxon>Pipidae</taxon>
        <taxon>Xenopodinae</taxon>
        <taxon>Xenopus</taxon>
        <taxon>Xenopus</taxon>
    </lineage>
</organism>
<proteinExistence type="evidence at protein level"/>
<dbReference type="EMBL" id="U20505">
    <property type="protein sequence ID" value="AAA62236.1"/>
    <property type="molecule type" value="mRNA"/>
</dbReference>
<dbReference type="RefSeq" id="NP_001081052.1">
    <property type="nucleotide sequence ID" value="NM_001087583.1"/>
</dbReference>
<dbReference type="SMR" id="P51947"/>
<dbReference type="DNASU" id="394356"/>
<dbReference type="GeneID" id="394356"/>
<dbReference type="KEGG" id="xla:394356"/>
<dbReference type="AGR" id="Xenbase:XB-GENE-922574"/>
<dbReference type="CTD" id="394356"/>
<dbReference type="Xenbase" id="XB-GENE-922574">
    <property type="gene designation" value="ccnh.L"/>
</dbReference>
<dbReference type="OrthoDB" id="340962at2759"/>
<dbReference type="Proteomes" id="UP000186698">
    <property type="component" value="Chromosome 1L"/>
</dbReference>
<dbReference type="Bgee" id="394356">
    <property type="expression patterns" value="Expressed in egg cell and 19 other cell types or tissues"/>
</dbReference>
<dbReference type="GO" id="GO:0005634">
    <property type="term" value="C:nucleus"/>
    <property type="evidence" value="ECO:0000318"/>
    <property type="project" value="GO_Central"/>
</dbReference>
<dbReference type="GO" id="GO:0070985">
    <property type="term" value="C:transcription factor TFIIK complex"/>
    <property type="evidence" value="ECO:0000318"/>
    <property type="project" value="GO_Central"/>
</dbReference>
<dbReference type="GO" id="GO:0016538">
    <property type="term" value="F:cyclin-dependent protein serine/threonine kinase regulator activity"/>
    <property type="evidence" value="ECO:0000318"/>
    <property type="project" value="GO_Central"/>
</dbReference>
<dbReference type="GO" id="GO:0006357">
    <property type="term" value="P:regulation of transcription by RNA polymerase II"/>
    <property type="evidence" value="ECO:0007669"/>
    <property type="project" value="InterPro"/>
</dbReference>
<dbReference type="GO" id="GO:0006367">
    <property type="term" value="P:transcription initiation at RNA polymerase II promoter"/>
    <property type="evidence" value="ECO:0000318"/>
    <property type="project" value="GO_Central"/>
</dbReference>
<dbReference type="CDD" id="cd20524">
    <property type="entry name" value="CYCLIN_CCNH_rpt1"/>
    <property type="match status" value="1"/>
</dbReference>
<dbReference type="CDD" id="cd20525">
    <property type="entry name" value="CYCLIN_CCNH_rpt2"/>
    <property type="match status" value="1"/>
</dbReference>
<dbReference type="FunFam" id="1.10.472.10:FF:000029">
    <property type="entry name" value="Cyclin h"/>
    <property type="match status" value="1"/>
</dbReference>
<dbReference type="FunFam" id="1.10.472.10:FF:000044">
    <property type="entry name" value="cyclin-H isoform X1"/>
    <property type="match status" value="1"/>
</dbReference>
<dbReference type="Gene3D" id="1.10.472.10">
    <property type="entry name" value="Cyclin-like"/>
    <property type="match status" value="2"/>
</dbReference>
<dbReference type="InterPro" id="IPR013763">
    <property type="entry name" value="Cyclin-like_dom"/>
</dbReference>
<dbReference type="InterPro" id="IPR036915">
    <property type="entry name" value="Cyclin-like_sf"/>
</dbReference>
<dbReference type="InterPro" id="IPR043198">
    <property type="entry name" value="Cyclin/Ssn8"/>
</dbReference>
<dbReference type="InterPro" id="IPR031658">
    <property type="entry name" value="Cyclin_C_2"/>
</dbReference>
<dbReference type="InterPro" id="IPR006671">
    <property type="entry name" value="Cyclin_N"/>
</dbReference>
<dbReference type="InterPro" id="IPR027081">
    <property type="entry name" value="CyclinH/Ccl1"/>
</dbReference>
<dbReference type="NCBIfam" id="TIGR00569">
    <property type="entry name" value="ccl1"/>
    <property type="match status" value="1"/>
</dbReference>
<dbReference type="PANTHER" id="PTHR10026">
    <property type="entry name" value="CYCLIN"/>
    <property type="match status" value="1"/>
</dbReference>
<dbReference type="Pfam" id="PF16899">
    <property type="entry name" value="Cyclin_C_2"/>
    <property type="match status" value="1"/>
</dbReference>
<dbReference type="Pfam" id="PF00134">
    <property type="entry name" value="Cyclin_N"/>
    <property type="match status" value="1"/>
</dbReference>
<dbReference type="SMART" id="SM00385">
    <property type="entry name" value="CYCLIN"/>
    <property type="match status" value="1"/>
</dbReference>
<dbReference type="SUPFAM" id="SSF47954">
    <property type="entry name" value="Cyclin-like"/>
    <property type="match status" value="2"/>
</dbReference>
<protein>
    <recommendedName>
        <fullName>Cyclin-H</fullName>
    </recommendedName>
    <alternativeName>
        <fullName>MO15-associated protein</fullName>
    </alternativeName>
    <alternativeName>
        <fullName>p36</fullName>
    </alternativeName>
</protein>
<accession>P51947</accession>